<protein>
    <recommendedName>
        <fullName evidence="1">Sec-independent protein translocase protein TatCo</fullName>
    </recommendedName>
</protein>
<name>TATCO_HALVD</name>
<keyword id="KW-1003">Cell membrane</keyword>
<keyword id="KW-0472">Membrane</keyword>
<keyword id="KW-0653">Protein transport</keyword>
<keyword id="KW-1185">Reference proteome</keyword>
<keyword id="KW-0811">Translocation</keyword>
<keyword id="KW-0812">Transmembrane</keyword>
<keyword id="KW-1133">Transmembrane helix</keyword>
<keyword id="KW-0813">Transport</keyword>
<sequence length="441" mass="46844">MADEERDAGLSAADDETDASDDTDQRSSDGDADDADDASSSSDGPVYGRVTPRDETVTHGSDDDASADVAAETGDNGDDSDSDTDAAPDDADDSATDSDADSDDEPRLLADDEHTSHVPEGTYDDSSDESADDVDPDAAADGASPALTGEDEMGGVAPSSVSAEDADFDDEDVGGLVGEAPESDQEMPLTAHIEEMIRRLAVVLGVAGAITLVLFPGADILNALVDTQAAFGVHIPSATDVINFLWNSHIPGAETIVDRRPRLYGPLELILTKLKVAGLAGTVIGLPVFVYETYLFMRPGLYPKERKYYLAAVPTSLVLALVGVLFAHFVVLPAIFAYFTSYTEGTAVVAFGLKETFNLILILMGYMAVVFQIPLFVELAIMMNLVTRRWLEDRRLLFWGAFLGLAFLVSPDPTGMAPIIIGATMITLFEGTLAALRWTGN</sequence>
<evidence type="ECO:0000255" key="1">
    <source>
        <dbReference type="HAMAP-Rule" id="MF_00902"/>
    </source>
</evidence>
<evidence type="ECO:0000256" key="2">
    <source>
        <dbReference type="SAM" id="MobiDB-lite"/>
    </source>
</evidence>
<evidence type="ECO:0000269" key="3">
    <source>
    </source>
</evidence>
<evidence type="ECO:0000305" key="4">
    <source>
    </source>
</evidence>
<proteinExistence type="inferred from homology"/>
<comment type="function">
    <text evidence="4">Part of the twin-arginine translocation (Tat) system that transports large folded proteins containing a characteristic twin-arginine motif in their signal peptide across membranes.</text>
</comment>
<comment type="subunit">
    <text evidence="1">Forms a complex with TatA.</text>
</comment>
<comment type="subcellular location">
    <subcellularLocation>
        <location evidence="1 3">Cell membrane</location>
        <topology evidence="1 3">Multi-pass membrane protein</topology>
    </subcellularLocation>
</comment>
<comment type="miscellaneous">
    <text evidence="4">H.volcanii possesses two TatC translocases: TatCo and TatCt. Both paralogs are structurally atypical and may represent adaptation to the extensive utilization of the Tat pathway in haloarchaea (PubMed:16291683).</text>
</comment>
<comment type="similarity">
    <text evidence="1">Belongs to the TatC family.</text>
</comment>
<gene>
    <name evidence="1" type="primary">tatCo</name>
    <name type="ordered locus">HVO_0186</name>
</gene>
<feature type="chain" id="PRO_0000417360" description="Sec-independent protein translocase protein TatCo">
    <location>
        <begin position="1"/>
        <end position="441"/>
    </location>
</feature>
<feature type="transmembrane region" description="Helical" evidence="1">
    <location>
        <begin position="200"/>
        <end position="220"/>
    </location>
</feature>
<feature type="transmembrane region" description="Helical" evidence="1">
    <location>
        <begin position="276"/>
        <end position="296"/>
    </location>
</feature>
<feature type="transmembrane region" description="Helical" evidence="1">
    <location>
        <begin position="317"/>
        <end position="337"/>
    </location>
</feature>
<feature type="transmembrane region" description="Helical" evidence="1">
    <location>
        <begin position="357"/>
        <end position="377"/>
    </location>
</feature>
<feature type="transmembrane region" description="Helical" evidence="1">
    <location>
        <begin position="395"/>
        <end position="415"/>
    </location>
</feature>
<feature type="transmembrane region" description="Helical" evidence="1">
    <location>
        <begin position="416"/>
        <end position="436"/>
    </location>
</feature>
<feature type="region of interest" description="Disordered" evidence="2">
    <location>
        <begin position="1"/>
        <end position="185"/>
    </location>
</feature>
<feature type="compositionally biased region" description="Acidic residues" evidence="2">
    <location>
        <begin position="13"/>
        <end position="22"/>
    </location>
</feature>
<feature type="compositionally biased region" description="Basic and acidic residues" evidence="2">
    <location>
        <begin position="51"/>
        <end position="62"/>
    </location>
</feature>
<feature type="compositionally biased region" description="Acidic residues" evidence="2">
    <location>
        <begin position="75"/>
        <end position="104"/>
    </location>
</feature>
<feature type="compositionally biased region" description="Basic and acidic residues" evidence="2">
    <location>
        <begin position="105"/>
        <end position="117"/>
    </location>
</feature>
<feature type="compositionally biased region" description="Acidic residues" evidence="2">
    <location>
        <begin position="122"/>
        <end position="138"/>
    </location>
</feature>
<feature type="compositionally biased region" description="Acidic residues" evidence="2">
    <location>
        <begin position="164"/>
        <end position="173"/>
    </location>
</feature>
<dbReference type="EMBL" id="CP001956">
    <property type="protein sequence ID" value="ADE04167.1"/>
    <property type="molecule type" value="Genomic_DNA"/>
</dbReference>
<dbReference type="RefSeq" id="WP_004045300.1">
    <property type="nucleotide sequence ID" value="NC_013967.1"/>
</dbReference>
<dbReference type="SMR" id="D4GZD0"/>
<dbReference type="STRING" id="309800.HVO_0186"/>
<dbReference type="TCDB" id="2.A.64.1.6">
    <property type="family name" value="the twin arginine targeting (tat) family"/>
</dbReference>
<dbReference type="PaxDb" id="309800-C498_19184"/>
<dbReference type="EnsemblBacteria" id="ADE04167">
    <property type="protein sequence ID" value="ADE04167"/>
    <property type="gene ID" value="HVO_0186"/>
</dbReference>
<dbReference type="GeneID" id="8923939"/>
<dbReference type="KEGG" id="hvo:HVO_0186"/>
<dbReference type="eggNOG" id="arCOG01919">
    <property type="taxonomic scope" value="Archaea"/>
</dbReference>
<dbReference type="HOGENOM" id="CLU_031942_8_0_2"/>
<dbReference type="OrthoDB" id="198870at2157"/>
<dbReference type="Proteomes" id="UP000008243">
    <property type="component" value="Chromosome"/>
</dbReference>
<dbReference type="GO" id="GO:0033281">
    <property type="term" value="C:TAT protein transport complex"/>
    <property type="evidence" value="ECO:0007669"/>
    <property type="project" value="UniProtKB-UniRule"/>
</dbReference>
<dbReference type="GO" id="GO:0009977">
    <property type="term" value="F:proton motive force dependent protein transmembrane transporter activity"/>
    <property type="evidence" value="ECO:0007669"/>
    <property type="project" value="TreeGrafter"/>
</dbReference>
<dbReference type="GO" id="GO:0065002">
    <property type="term" value="P:intracellular protein transmembrane transport"/>
    <property type="evidence" value="ECO:0007669"/>
    <property type="project" value="TreeGrafter"/>
</dbReference>
<dbReference type="GO" id="GO:0043953">
    <property type="term" value="P:protein transport by the Tat complex"/>
    <property type="evidence" value="ECO:0007669"/>
    <property type="project" value="UniProtKB-UniRule"/>
</dbReference>
<dbReference type="HAMAP" id="MF_00902">
    <property type="entry name" value="TatC"/>
    <property type="match status" value="1"/>
</dbReference>
<dbReference type="InterPro" id="IPR002033">
    <property type="entry name" value="TatC"/>
</dbReference>
<dbReference type="PANTHER" id="PTHR30371">
    <property type="entry name" value="SEC-INDEPENDENT PROTEIN TRANSLOCASE PROTEIN TATC"/>
    <property type="match status" value="1"/>
</dbReference>
<dbReference type="PANTHER" id="PTHR30371:SF0">
    <property type="entry name" value="SEC-INDEPENDENT PROTEIN TRANSLOCASE PROTEIN TATC, CHLOROPLASTIC-RELATED"/>
    <property type="match status" value="1"/>
</dbReference>
<dbReference type="Pfam" id="PF00902">
    <property type="entry name" value="TatC"/>
    <property type="match status" value="1"/>
</dbReference>
<dbReference type="PRINTS" id="PR01840">
    <property type="entry name" value="TATCFAMILY"/>
</dbReference>
<organism>
    <name type="scientific">Haloferax volcanii (strain ATCC 29605 / DSM 3757 / JCM 8879 / NBRC 14742 / NCIMB 2012 / VKM B-1768 / DS2)</name>
    <name type="common">Halobacterium volcanii</name>
    <dbReference type="NCBI Taxonomy" id="309800"/>
    <lineage>
        <taxon>Archaea</taxon>
        <taxon>Methanobacteriati</taxon>
        <taxon>Methanobacteriota</taxon>
        <taxon>Stenosarchaea group</taxon>
        <taxon>Halobacteria</taxon>
        <taxon>Halobacteriales</taxon>
        <taxon>Haloferacaceae</taxon>
        <taxon>Haloferax</taxon>
    </lineage>
</organism>
<accession>D4GZD0</accession>
<reference key="1">
    <citation type="journal article" date="2010" name="PLoS ONE">
        <title>The complete genome sequence of Haloferax volcanii DS2, a model archaeon.</title>
        <authorList>
            <person name="Hartman A.L."/>
            <person name="Norais C."/>
            <person name="Badger J.H."/>
            <person name="Delmas S."/>
            <person name="Haldenby S."/>
            <person name="Madupu R."/>
            <person name="Robinson J."/>
            <person name="Khouri H."/>
            <person name="Ren Q."/>
            <person name="Lowe T.M."/>
            <person name="Maupin-Furlow J."/>
            <person name="Pohlschroder M."/>
            <person name="Daniels C."/>
            <person name="Pfeiffer F."/>
            <person name="Allers T."/>
            <person name="Eisen J.A."/>
        </authorList>
    </citation>
    <scope>NUCLEOTIDE SEQUENCE [LARGE SCALE GENOMIC DNA]</scope>
    <source>
        <strain>ATCC 29605 / DSM 3757 / JCM 8879 / NBRC 14742 / NCIMB 2012 / VKM B-1768 / DS2</strain>
    </source>
</reference>
<reference key="2">
    <citation type="journal article" date="2005" name="J. Bacteriol.">
        <title>Genetic and biochemical analysis of the twin-arginine translocation pathway in halophilic archaea.</title>
        <authorList>
            <person name="Dilks K."/>
            <person name="Gimenez M.I."/>
            <person name="Pohlschroder M."/>
        </authorList>
    </citation>
    <scope>FUNCTION</scope>
    <scope>SUBCELLULAR LOCATION</scope>
    <source>
        <strain>DS2 / DS70 / H99</strain>
    </source>
</reference>